<proteinExistence type="inferred from homology"/>
<reference key="1">
    <citation type="journal article" date="2010" name="PLoS Genet.">
        <title>De novo assembly of a 40 Mb eukaryotic genome from short sequence reads: Sordaria macrospora, a model organism for fungal morphogenesis.</title>
        <authorList>
            <person name="Nowrousian M."/>
            <person name="Stajich J.E."/>
            <person name="Chu M."/>
            <person name="Engh I."/>
            <person name="Espagne E."/>
            <person name="Halliday K."/>
            <person name="Kamerewerd J."/>
            <person name="Kempken F."/>
            <person name="Knab B."/>
            <person name="Kuo H.-C."/>
            <person name="Osiewacz H.D."/>
            <person name="Poeggeler S."/>
            <person name="Read N.D."/>
            <person name="Seiler S."/>
            <person name="Smith K.M."/>
            <person name="Zickler D."/>
            <person name="Kueck U."/>
            <person name="Freitag M."/>
        </authorList>
    </citation>
    <scope>NUCLEOTIDE SEQUENCE [LARGE SCALE GENOMIC DNA]</scope>
    <source>
        <strain>ATCC MYA-333 / DSM 997 / K(L3346) / K-hell</strain>
    </source>
</reference>
<evidence type="ECO:0000250" key="1"/>
<evidence type="ECO:0000255" key="2"/>
<evidence type="ECO:0000255" key="3">
    <source>
        <dbReference type="PROSITE-ProRule" id="PRU10095"/>
    </source>
</evidence>
<evidence type="ECO:0000305" key="4"/>
<name>MEP1_SORMK</name>
<sequence length="285" mass="30543">MQIKSLLLAAAAAPAALGAAVGTVKPFNCGTDAPSRQHIQMTKEIAEKEAAFTAAGGVSAQAAINVNVYFHVVASSTSLSGGYVTSTMINNQVSVLNTAYAPHGIQFTLKGTDYTVNSNWAVDGSELAMKKALRKGTYKDLNLYILKDLGDALGYCYFPTSVTSKSNDWYYDGCSILYNTLPGGDLTNYNLGHTSTHEVGHWFGLYHTFQGGCTGNGDYVADTPAQASASSGCPTGRDSCPSQTGLDPIHNYMDYSYDTCYEEFTAGQKTRMTSYFNQYRANASV</sequence>
<dbReference type="EC" id="3.4.24.-"/>
<dbReference type="EMBL" id="CABT02000038">
    <property type="protein sequence ID" value="CCC13395.1"/>
    <property type="molecule type" value="Genomic_DNA"/>
</dbReference>
<dbReference type="RefSeq" id="XP_003344584.1">
    <property type="nucleotide sequence ID" value="XM_003344536.1"/>
</dbReference>
<dbReference type="SMR" id="D1ZSU8"/>
<dbReference type="MEROPS" id="M43.008"/>
<dbReference type="GeneID" id="10801885"/>
<dbReference type="KEGG" id="smp:10801885"/>
<dbReference type="VEuPathDB" id="FungiDB:SMAC_06893"/>
<dbReference type="eggNOG" id="ENOG502RYKG">
    <property type="taxonomic scope" value="Eukaryota"/>
</dbReference>
<dbReference type="HOGENOM" id="CLU_048726_0_0_1"/>
<dbReference type="InParanoid" id="D1ZSU8"/>
<dbReference type="OMA" id="RTTNWYW"/>
<dbReference type="OrthoDB" id="536211at2759"/>
<dbReference type="Proteomes" id="UP000001881">
    <property type="component" value="Unassembled WGS sequence"/>
</dbReference>
<dbReference type="GO" id="GO:0005576">
    <property type="term" value="C:extracellular region"/>
    <property type="evidence" value="ECO:0007669"/>
    <property type="project" value="UniProtKB-SubCell"/>
</dbReference>
<dbReference type="GO" id="GO:0046872">
    <property type="term" value="F:metal ion binding"/>
    <property type="evidence" value="ECO:0007669"/>
    <property type="project" value="UniProtKB-KW"/>
</dbReference>
<dbReference type="GO" id="GO:0008237">
    <property type="term" value="F:metallopeptidase activity"/>
    <property type="evidence" value="ECO:0007669"/>
    <property type="project" value="UniProtKB-KW"/>
</dbReference>
<dbReference type="GO" id="GO:0006508">
    <property type="term" value="P:proteolysis"/>
    <property type="evidence" value="ECO:0007669"/>
    <property type="project" value="UniProtKB-KW"/>
</dbReference>
<dbReference type="CDD" id="cd04275">
    <property type="entry name" value="ZnMc_pappalysin_like"/>
    <property type="match status" value="1"/>
</dbReference>
<dbReference type="Gene3D" id="3.40.390.10">
    <property type="entry name" value="Collagenase (Catalytic Domain)"/>
    <property type="match status" value="1"/>
</dbReference>
<dbReference type="InterPro" id="IPR024079">
    <property type="entry name" value="MetalloPept_cat_dom_sf"/>
</dbReference>
<dbReference type="InterPro" id="IPR008754">
    <property type="entry name" value="Peptidase_M43"/>
</dbReference>
<dbReference type="PANTHER" id="PTHR47466">
    <property type="match status" value="1"/>
</dbReference>
<dbReference type="PANTHER" id="PTHR47466:SF1">
    <property type="entry name" value="METALLOPROTEASE MEP1 (AFU_ORTHOLOGUE AFUA_1G07730)-RELATED"/>
    <property type="match status" value="1"/>
</dbReference>
<dbReference type="Pfam" id="PF05572">
    <property type="entry name" value="Peptidase_M43"/>
    <property type="match status" value="1"/>
</dbReference>
<dbReference type="SUPFAM" id="SSF55486">
    <property type="entry name" value="Metalloproteases ('zincins'), catalytic domain"/>
    <property type="match status" value="1"/>
</dbReference>
<dbReference type="PROSITE" id="PS00142">
    <property type="entry name" value="ZINC_PROTEASE"/>
    <property type="match status" value="1"/>
</dbReference>
<comment type="function">
    <text evidence="1">Secreted metalloproteinase that allows assimilation of proteinaceous substrates.</text>
</comment>
<comment type="subcellular location">
    <subcellularLocation>
        <location evidence="1">Secreted</location>
    </subcellularLocation>
</comment>
<comment type="similarity">
    <text evidence="4">Belongs to the peptidase M43B family.</text>
</comment>
<keyword id="KW-1015">Disulfide bond</keyword>
<keyword id="KW-0325">Glycoprotein</keyword>
<keyword id="KW-0378">Hydrolase</keyword>
<keyword id="KW-0479">Metal-binding</keyword>
<keyword id="KW-0482">Metalloprotease</keyword>
<keyword id="KW-0645">Protease</keyword>
<keyword id="KW-1185">Reference proteome</keyword>
<keyword id="KW-0964">Secreted</keyword>
<keyword id="KW-0732">Signal</keyword>
<keyword id="KW-0862">Zinc</keyword>
<organism>
    <name type="scientific">Sordaria macrospora (strain ATCC MYA-333 / DSM 997 / K(L3346) / K-hell)</name>
    <dbReference type="NCBI Taxonomy" id="771870"/>
    <lineage>
        <taxon>Eukaryota</taxon>
        <taxon>Fungi</taxon>
        <taxon>Dikarya</taxon>
        <taxon>Ascomycota</taxon>
        <taxon>Pezizomycotina</taxon>
        <taxon>Sordariomycetes</taxon>
        <taxon>Sordariomycetidae</taxon>
        <taxon>Sordariales</taxon>
        <taxon>Sordariaceae</taxon>
        <taxon>Sordaria</taxon>
    </lineage>
</organism>
<protein>
    <recommendedName>
        <fullName>Extracellular metalloprotease SMAC_06893</fullName>
        <ecNumber>3.4.24.-</ecNumber>
    </recommendedName>
</protein>
<accession>D1ZSU8</accession>
<accession>F7W7A4</accession>
<gene>
    <name type="ORF">SMAC_06893</name>
</gene>
<feature type="signal peptide" evidence="2">
    <location>
        <begin position="1"/>
        <end position="18"/>
    </location>
</feature>
<feature type="chain" id="PRO_0000407205" description="Extracellular metalloprotease SMAC_06893">
    <location>
        <begin position="19"/>
        <end position="285"/>
    </location>
</feature>
<feature type="active site" evidence="3">
    <location>
        <position position="198"/>
    </location>
</feature>
<feature type="binding site" evidence="3">
    <location>
        <position position="197"/>
    </location>
    <ligand>
        <name>Zn(2+)</name>
        <dbReference type="ChEBI" id="CHEBI:29105"/>
        <note>catalytic</note>
    </ligand>
</feature>
<feature type="binding site" evidence="3">
    <location>
        <position position="201"/>
    </location>
    <ligand>
        <name>Zn(2+)</name>
        <dbReference type="ChEBI" id="CHEBI:29105"/>
        <note>catalytic</note>
    </ligand>
</feature>
<feature type="glycosylation site" description="N-linked (GlcNAc...) asparagine" evidence="2">
    <location>
        <position position="282"/>
    </location>
</feature>
<feature type="disulfide bond" evidence="1">
    <location>
        <begin position="233"/>
        <end position="260"/>
    </location>
</feature>